<keyword id="KW-0238">DNA-binding</keyword>
<keyword id="KW-1017">Isopeptide bond</keyword>
<keyword id="KW-0479">Metal-binding</keyword>
<keyword id="KW-0539">Nucleus</keyword>
<keyword id="KW-1185">Reference proteome</keyword>
<keyword id="KW-0677">Repeat</keyword>
<keyword id="KW-0804">Transcription</keyword>
<keyword id="KW-0805">Transcription regulation</keyword>
<keyword id="KW-0832">Ubl conjugation</keyword>
<keyword id="KW-0862">Zinc</keyword>
<keyword id="KW-0863">Zinc-finger</keyword>
<proteinExistence type="evidence at transcript level"/>
<reference key="1">
    <citation type="journal article" date="2005" name="Science">
        <title>The transcriptional landscape of the mammalian genome.</title>
        <authorList>
            <person name="Carninci P."/>
            <person name="Kasukawa T."/>
            <person name="Katayama S."/>
            <person name="Gough J."/>
            <person name="Frith M.C."/>
            <person name="Maeda N."/>
            <person name="Oyama R."/>
            <person name="Ravasi T."/>
            <person name="Lenhard B."/>
            <person name="Wells C."/>
            <person name="Kodzius R."/>
            <person name="Shimokawa K."/>
            <person name="Bajic V.B."/>
            <person name="Brenner S.E."/>
            <person name="Batalov S."/>
            <person name="Forrest A.R."/>
            <person name="Zavolan M."/>
            <person name="Davis M.J."/>
            <person name="Wilming L.G."/>
            <person name="Aidinis V."/>
            <person name="Allen J.E."/>
            <person name="Ambesi-Impiombato A."/>
            <person name="Apweiler R."/>
            <person name="Aturaliya R.N."/>
            <person name="Bailey T.L."/>
            <person name="Bansal M."/>
            <person name="Baxter L."/>
            <person name="Beisel K.W."/>
            <person name="Bersano T."/>
            <person name="Bono H."/>
            <person name="Chalk A.M."/>
            <person name="Chiu K.P."/>
            <person name="Choudhary V."/>
            <person name="Christoffels A."/>
            <person name="Clutterbuck D.R."/>
            <person name="Crowe M.L."/>
            <person name="Dalla E."/>
            <person name="Dalrymple B.P."/>
            <person name="de Bono B."/>
            <person name="Della Gatta G."/>
            <person name="di Bernardo D."/>
            <person name="Down T."/>
            <person name="Engstrom P."/>
            <person name="Fagiolini M."/>
            <person name="Faulkner G."/>
            <person name="Fletcher C.F."/>
            <person name="Fukushima T."/>
            <person name="Furuno M."/>
            <person name="Futaki S."/>
            <person name="Gariboldi M."/>
            <person name="Georgii-Hemming P."/>
            <person name="Gingeras T.R."/>
            <person name="Gojobori T."/>
            <person name="Green R.E."/>
            <person name="Gustincich S."/>
            <person name="Harbers M."/>
            <person name="Hayashi Y."/>
            <person name="Hensch T.K."/>
            <person name="Hirokawa N."/>
            <person name="Hill D."/>
            <person name="Huminiecki L."/>
            <person name="Iacono M."/>
            <person name="Ikeo K."/>
            <person name="Iwama A."/>
            <person name="Ishikawa T."/>
            <person name="Jakt M."/>
            <person name="Kanapin A."/>
            <person name="Katoh M."/>
            <person name="Kawasawa Y."/>
            <person name="Kelso J."/>
            <person name="Kitamura H."/>
            <person name="Kitano H."/>
            <person name="Kollias G."/>
            <person name="Krishnan S.P."/>
            <person name="Kruger A."/>
            <person name="Kummerfeld S.K."/>
            <person name="Kurochkin I.V."/>
            <person name="Lareau L.F."/>
            <person name="Lazarevic D."/>
            <person name="Lipovich L."/>
            <person name="Liu J."/>
            <person name="Liuni S."/>
            <person name="McWilliam S."/>
            <person name="Madan Babu M."/>
            <person name="Madera M."/>
            <person name="Marchionni L."/>
            <person name="Matsuda H."/>
            <person name="Matsuzawa S."/>
            <person name="Miki H."/>
            <person name="Mignone F."/>
            <person name="Miyake S."/>
            <person name="Morris K."/>
            <person name="Mottagui-Tabar S."/>
            <person name="Mulder N."/>
            <person name="Nakano N."/>
            <person name="Nakauchi H."/>
            <person name="Ng P."/>
            <person name="Nilsson R."/>
            <person name="Nishiguchi S."/>
            <person name="Nishikawa S."/>
            <person name="Nori F."/>
            <person name="Ohara O."/>
            <person name="Okazaki Y."/>
            <person name="Orlando V."/>
            <person name="Pang K.C."/>
            <person name="Pavan W.J."/>
            <person name="Pavesi G."/>
            <person name="Pesole G."/>
            <person name="Petrovsky N."/>
            <person name="Piazza S."/>
            <person name="Reed J."/>
            <person name="Reid J.F."/>
            <person name="Ring B.Z."/>
            <person name="Ringwald M."/>
            <person name="Rost B."/>
            <person name="Ruan Y."/>
            <person name="Salzberg S.L."/>
            <person name="Sandelin A."/>
            <person name="Schneider C."/>
            <person name="Schoenbach C."/>
            <person name="Sekiguchi K."/>
            <person name="Semple C.A."/>
            <person name="Seno S."/>
            <person name="Sessa L."/>
            <person name="Sheng Y."/>
            <person name="Shibata Y."/>
            <person name="Shimada H."/>
            <person name="Shimada K."/>
            <person name="Silva D."/>
            <person name="Sinclair B."/>
            <person name="Sperling S."/>
            <person name="Stupka E."/>
            <person name="Sugiura K."/>
            <person name="Sultana R."/>
            <person name="Takenaka Y."/>
            <person name="Taki K."/>
            <person name="Tammoja K."/>
            <person name="Tan S.L."/>
            <person name="Tang S."/>
            <person name="Taylor M.S."/>
            <person name="Tegner J."/>
            <person name="Teichmann S.A."/>
            <person name="Ueda H.R."/>
            <person name="van Nimwegen E."/>
            <person name="Verardo R."/>
            <person name="Wei C.L."/>
            <person name="Yagi K."/>
            <person name="Yamanishi H."/>
            <person name="Zabarovsky E."/>
            <person name="Zhu S."/>
            <person name="Zimmer A."/>
            <person name="Hide W."/>
            <person name="Bult C."/>
            <person name="Grimmond S.M."/>
            <person name="Teasdale R.D."/>
            <person name="Liu E.T."/>
            <person name="Brusic V."/>
            <person name="Quackenbush J."/>
            <person name="Wahlestedt C."/>
            <person name="Mattick J.S."/>
            <person name="Hume D.A."/>
            <person name="Kai C."/>
            <person name="Sasaki D."/>
            <person name="Tomaru Y."/>
            <person name="Fukuda S."/>
            <person name="Kanamori-Katayama M."/>
            <person name="Suzuki M."/>
            <person name="Aoki J."/>
            <person name="Arakawa T."/>
            <person name="Iida J."/>
            <person name="Imamura K."/>
            <person name="Itoh M."/>
            <person name="Kato T."/>
            <person name="Kawaji H."/>
            <person name="Kawagashira N."/>
            <person name="Kawashima T."/>
            <person name="Kojima M."/>
            <person name="Kondo S."/>
            <person name="Konno H."/>
            <person name="Nakano K."/>
            <person name="Ninomiya N."/>
            <person name="Nishio T."/>
            <person name="Okada M."/>
            <person name="Plessy C."/>
            <person name="Shibata K."/>
            <person name="Shiraki T."/>
            <person name="Suzuki S."/>
            <person name="Tagami M."/>
            <person name="Waki K."/>
            <person name="Watahiki A."/>
            <person name="Okamura-Oho Y."/>
            <person name="Suzuki H."/>
            <person name="Kawai J."/>
            <person name="Hayashizaki Y."/>
        </authorList>
    </citation>
    <scope>NUCLEOTIDE SEQUENCE [LARGE SCALE MRNA]</scope>
    <source>
        <strain>C57BL/6J</strain>
        <tissue>Head</tissue>
        <tissue>Spinal ganglion</tissue>
    </source>
</reference>
<reference key="2">
    <citation type="journal article" date="2004" name="Genome Res.">
        <title>The status, quality, and expansion of the NIH full-length cDNA project: the Mammalian Gene Collection (MGC).</title>
        <authorList>
            <consortium name="The MGC Project Team"/>
        </authorList>
    </citation>
    <scope>NUCLEOTIDE SEQUENCE [LARGE SCALE MRNA]</scope>
    <source>
        <strain>C57BL/6J</strain>
        <tissue>Brain</tissue>
    </source>
</reference>
<organism>
    <name type="scientific">Mus musculus</name>
    <name type="common">Mouse</name>
    <dbReference type="NCBI Taxonomy" id="10090"/>
    <lineage>
        <taxon>Eukaryota</taxon>
        <taxon>Metazoa</taxon>
        <taxon>Chordata</taxon>
        <taxon>Craniata</taxon>
        <taxon>Vertebrata</taxon>
        <taxon>Euteleostomi</taxon>
        <taxon>Mammalia</taxon>
        <taxon>Eutheria</taxon>
        <taxon>Euarchontoglires</taxon>
        <taxon>Glires</taxon>
        <taxon>Rodentia</taxon>
        <taxon>Myomorpha</taxon>
        <taxon>Muroidea</taxon>
        <taxon>Muridae</taxon>
        <taxon>Murinae</taxon>
        <taxon>Mus</taxon>
        <taxon>Mus</taxon>
    </lineage>
</organism>
<gene>
    <name type="primary">Znf689</name>
    <name type="synonym">Zfp689</name>
</gene>
<evidence type="ECO:0000250" key="1">
    <source>
        <dbReference type="UniProtKB" id="Q96CS4"/>
    </source>
</evidence>
<evidence type="ECO:0000255" key="2">
    <source>
        <dbReference type="PROSITE-ProRule" id="PRU00042"/>
    </source>
</evidence>
<evidence type="ECO:0000255" key="3">
    <source>
        <dbReference type="PROSITE-ProRule" id="PRU00119"/>
    </source>
</evidence>
<evidence type="ECO:0000256" key="4">
    <source>
        <dbReference type="SAM" id="MobiDB-lite"/>
    </source>
</evidence>
<evidence type="ECO:0000305" key="5"/>
<name>ZN689_MOUSE</name>
<protein>
    <recommendedName>
        <fullName>Zinc finger protein 689</fullName>
    </recommendedName>
</protein>
<sequence>MAPPSAPLLLRAVGEAGPTRKRGRRPRALKFVDVAVYFSSEEWGCLQPAQRTLYRDVMRETYGLLGALGCAGPKPALISWLERNTDDWEPAALDPQEYRRWVTFQRKTRSKQKTEEKDVFPPKEAPRKGKRGRKPSKPRLIPRQTSGGPICPDCGCTFPDHLALESHKCAQNLKKPYPCPDCGRRFSYPSLLVSHRRAHSGECPYVCDQCGKRFSQRKNLSQHQVIHTGEKPYHCPDCGRCFRRSRSLANHRTTHTGEKPHQCPSCGRRFAYPSLLAIHQRTHTGEKPYTCLECSRRFRQRTALVIHQRIHTGEKPYPCPDCERRFSSSSRLVSHRRVHSGERPYACENCEARFSQRSTLLQHQLLHTGEKPYPCPDCGRAFRRSGSLAIHRSTHTEEKLHACDDCGRRFAYPSLLASHRRVHSGERPYACDLCSKRFAQWSHLSQHQLLHTGEKPFPCLECGRCFRQRWSLAVHKCCPNTPNGSPRPLIGGPSQRSSAL</sequence>
<comment type="function">
    <text>May be involved in transcriptional regulation.</text>
</comment>
<comment type="subcellular location">
    <subcellularLocation>
        <location evidence="5">Nucleus</location>
    </subcellularLocation>
</comment>
<comment type="similarity">
    <text evidence="5">Belongs to the krueppel C2H2-type zinc-finger protein family.</text>
</comment>
<feature type="chain" id="PRO_0000234009" description="Zinc finger protein 689">
    <location>
        <begin position="1"/>
        <end position="500"/>
    </location>
</feature>
<feature type="domain" description="KRAB" evidence="3">
    <location>
        <begin position="29"/>
        <end position="100"/>
    </location>
</feature>
<feature type="zinc finger region" description="C2H2-type 1; degenerate" evidence="2">
    <location>
        <begin position="149"/>
        <end position="171"/>
    </location>
</feature>
<feature type="zinc finger region" description="C2H2-type 2" evidence="2">
    <location>
        <begin position="177"/>
        <end position="199"/>
    </location>
</feature>
<feature type="zinc finger region" description="C2H2-type 3" evidence="2">
    <location>
        <begin position="205"/>
        <end position="227"/>
    </location>
</feature>
<feature type="zinc finger region" description="C2H2-type 4" evidence="2">
    <location>
        <begin position="233"/>
        <end position="255"/>
    </location>
</feature>
<feature type="zinc finger region" description="C2H2-type 5" evidence="2">
    <location>
        <begin position="261"/>
        <end position="283"/>
    </location>
</feature>
<feature type="zinc finger region" description="C2H2-type 6" evidence="2">
    <location>
        <begin position="289"/>
        <end position="311"/>
    </location>
</feature>
<feature type="zinc finger region" description="C2H2-type 7" evidence="2">
    <location>
        <begin position="317"/>
        <end position="339"/>
    </location>
</feature>
<feature type="zinc finger region" description="C2H2-type 8" evidence="2">
    <location>
        <begin position="345"/>
        <end position="367"/>
    </location>
</feature>
<feature type="zinc finger region" description="C2H2-type 9" evidence="2">
    <location>
        <begin position="373"/>
        <end position="395"/>
    </location>
</feature>
<feature type="zinc finger region" description="C2H2-type 10" evidence="2">
    <location>
        <begin position="401"/>
        <end position="423"/>
    </location>
</feature>
<feature type="zinc finger region" description="C2H2-type 11" evidence="2">
    <location>
        <begin position="429"/>
        <end position="451"/>
    </location>
</feature>
<feature type="zinc finger region" description="C2H2-type 12; degenerate" evidence="2">
    <location>
        <begin position="457"/>
        <end position="483"/>
    </location>
</feature>
<feature type="region of interest" description="Disordered" evidence="4">
    <location>
        <begin position="105"/>
        <end position="144"/>
    </location>
</feature>
<feature type="compositionally biased region" description="Basic and acidic residues" evidence="4">
    <location>
        <begin position="112"/>
        <end position="127"/>
    </location>
</feature>
<feature type="compositionally biased region" description="Basic residues" evidence="4">
    <location>
        <begin position="128"/>
        <end position="137"/>
    </location>
</feature>
<feature type="cross-link" description="Glycyl lysine isopeptide (Lys-Gly) (interchain with G-Cter in SUMO2)" evidence="1">
    <location>
        <position position="455"/>
    </location>
</feature>
<feature type="sequence conflict" description="In Ref. 1; BAC25939." evidence="5" ref="1">
    <original>L</original>
    <variation>V</variation>
    <location>
        <position position="450"/>
    </location>
</feature>
<accession>Q8BKK5</accession>
<accession>Q8C1C6</accession>
<dbReference type="EMBL" id="AK028417">
    <property type="protein sequence ID" value="BAC25939.1"/>
    <property type="molecule type" value="mRNA"/>
</dbReference>
<dbReference type="EMBL" id="AK051667">
    <property type="protein sequence ID" value="BAC34710.1"/>
    <property type="molecule type" value="mRNA"/>
</dbReference>
<dbReference type="EMBL" id="BC052084">
    <property type="protein sequence ID" value="AAH52084.1"/>
    <property type="molecule type" value="mRNA"/>
</dbReference>
<dbReference type="CCDS" id="CCDS21867.1"/>
<dbReference type="RefSeq" id="NP_780372.2">
    <property type="nucleotide sequence ID" value="NM_175163.3"/>
</dbReference>
<dbReference type="SMR" id="Q8BKK5"/>
<dbReference type="FunCoup" id="Q8BKK5">
    <property type="interactions" value="47"/>
</dbReference>
<dbReference type="iPTMnet" id="Q8BKK5"/>
<dbReference type="PhosphoSitePlus" id="Q8BKK5"/>
<dbReference type="PaxDb" id="10090-ENSMUSP00000056610"/>
<dbReference type="ProteomicsDB" id="302092"/>
<dbReference type="Antibodypedia" id="27365">
    <property type="antibodies" value="71 antibodies from 18 providers"/>
</dbReference>
<dbReference type="DNASU" id="71131"/>
<dbReference type="Ensembl" id="ENSMUST00000053392.11">
    <property type="protein sequence ID" value="ENSMUSP00000056610.5"/>
    <property type="gene ID" value="ENSMUSG00000048921.12"/>
</dbReference>
<dbReference type="GeneID" id="71131"/>
<dbReference type="KEGG" id="mmu:71131"/>
<dbReference type="UCSC" id="uc009jvl.2">
    <property type="organism name" value="mouse"/>
</dbReference>
<dbReference type="AGR" id="MGI:1918381"/>
<dbReference type="CTD" id="71131"/>
<dbReference type="MGI" id="MGI:1918381">
    <property type="gene designation" value="Zfp689"/>
</dbReference>
<dbReference type="VEuPathDB" id="HostDB:ENSMUSG00000048921"/>
<dbReference type="eggNOG" id="KOG1721">
    <property type="taxonomic scope" value="Eukaryota"/>
</dbReference>
<dbReference type="GeneTree" id="ENSGT00940000162326"/>
<dbReference type="HOGENOM" id="CLU_002678_13_1_1"/>
<dbReference type="InParanoid" id="Q8BKK5"/>
<dbReference type="OMA" id="QSHKCAQ"/>
<dbReference type="OrthoDB" id="6077919at2759"/>
<dbReference type="PhylomeDB" id="Q8BKK5"/>
<dbReference type="TreeFam" id="TF336948"/>
<dbReference type="Reactome" id="R-MMU-212436">
    <property type="pathway name" value="Generic Transcription Pathway"/>
</dbReference>
<dbReference type="BioGRID-ORCS" id="71131">
    <property type="hits" value="0 hits in 77 CRISPR screens"/>
</dbReference>
<dbReference type="PRO" id="PR:Q8BKK5"/>
<dbReference type="Proteomes" id="UP000000589">
    <property type="component" value="Chromosome 7"/>
</dbReference>
<dbReference type="RNAct" id="Q8BKK5">
    <property type="molecule type" value="protein"/>
</dbReference>
<dbReference type="Bgee" id="ENSMUSG00000048921">
    <property type="expression patterns" value="Expressed in cortical plate and 134 other cell types or tissues"/>
</dbReference>
<dbReference type="ExpressionAtlas" id="Q8BKK5">
    <property type="expression patterns" value="baseline and differential"/>
</dbReference>
<dbReference type="GO" id="GO:0005634">
    <property type="term" value="C:nucleus"/>
    <property type="evidence" value="ECO:0007669"/>
    <property type="project" value="UniProtKB-SubCell"/>
</dbReference>
<dbReference type="GO" id="GO:0003677">
    <property type="term" value="F:DNA binding"/>
    <property type="evidence" value="ECO:0007669"/>
    <property type="project" value="UniProtKB-KW"/>
</dbReference>
<dbReference type="GO" id="GO:0008270">
    <property type="term" value="F:zinc ion binding"/>
    <property type="evidence" value="ECO:0007669"/>
    <property type="project" value="UniProtKB-KW"/>
</dbReference>
<dbReference type="GO" id="GO:0006355">
    <property type="term" value="P:regulation of DNA-templated transcription"/>
    <property type="evidence" value="ECO:0007669"/>
    <property type="project" value="InterPro"/>
</dbReference>
<dbReference type="GO" id="GO:0035914">
    <property type="term" value="P:skeletal muscle cell differentiation"/>
    <property type="evidence" value="ECO:0000315"/>
    <property type="project" value="MGI"/>
</dbReference>
<dbReference type="CDD" id="cd07765">
    <property type="entry name" value="KRAB_A-box"/>
    <property type="match status" value="1"/>
</dbReference>
<dbReference type="FunFam" id="3.30.160.60:FF:000295">
    <property type="entry name" value="zinc finger protein 19"/>
    <property type="match status" value="1"/>
</dbReference>
<dbReference type="FunFam" id="3.30.160.60:FF:000180">
    <property type="entry name" value="Zinc finger protein 689"/>
    <property type="match status" value="6"/>
</dbReference>
<dbReference type="FunFam" id="3.30.160.60:FF:000070">
    <property type="entry name" value="zinc finger protein 689 isoform X1"/>
    <property type="match status" value="3"/>
</dbReference>
<dbReference type="FunFam" id="3.30.160.60:FF:000710">
    <property type="entry name" value="Zinc finger protein 768"/>
    <property type="match status" value="1"/>
</dbReference>
<dbReference type="Gene3D" id="6.10.140.140">
    <property type="match status" value="1"/>
</dbReference>
<dbReference type="Gene3D" id="3.30.160.60">
    <property type="entry name" value="Classic Zinc Finger"/>
    <property type="match status" value="11"/>
</dbReference>
<dbReference type="InterPro" id="IPR001909">
    <property type="entry name" value="KRAB"/>
</dbReference>
<dbReference type="InterPro" id="IPR036051">
    <property type="entry name" value="KRAB_dom_sf"/>
</dbReference>
<dbReference type="InterPro" id="IPR050527">
    <property type="entry name" value="Snail/Krueppel_Znf"/>
</dbReference>
<dbReference type="InterPro" id="IPR036236">
    <property type="entry name" value="Znf_C2H2_sf"/>
</dbReference>
<dbReference type="InterPro" id="IPR013087">
    <property type="entry name" value="Znf_C2H2_type"/>
</dbReference>
<dbReference type="PANTHER" id="PTHR24388:SF54">
    <property type="entry name" value="PROTEIN ESCARGOT"/>
    <property type="match status" value="1"/>
</dbReference>
<dbReference type="PANTHER" id="PTHR24388">
    <property type="entry name" value="ZINC FINGER PROTEIN"/>
    <property type="match status" value="1"/>
</dbReference>
<dbReference type="Pfam" id="PF01352">
    <property type="entry name" value="KRAB"/>
    <property type="match status" value="1"/>
</dbReference>
<dbReference type="Pfam" id="PF00096">
    <property type="entry name" value="zf-C2H2"/>
    <property type="match status" value="10"/>
</dbReference>
<dbReference type="SMART" id="SM00349">
    <property type="entry name" value="KRAB"/>
    <property type="match status" value="1"/>
</dbReference>
<dbReference type="SMART" id="SM00355">
    <property type="entry name" value="ZnF_C2H2"/>
    <property type="match status" value="12"/>
</dbReference>
<dbReference type="SUPFAM" id="SSF57667">
    <property type="entry name" value="beta-beta-alpha zinc fingers"/>
    <property type="match status" value="6"/>
</dbReference>
<dbReference type="SUPFAM" id="SSF109640">
    <property type="entry name" value="KRAB domain (Kruppel-associated box)"/>
    <property type="match status" value="1"/>
</dbReference>
<dbReference type="PROSITE" id="PS50805">
    <property type="entry name" value="KRAB"/>
    <property type="match status" value="1"/>
</dbReference>
<dbReference type="PROSITE" id="PS00028">
    <property type="entry name" value="ZINC_FINGER_C2H2_1"/>
    <property type="match status" value="10"/>
</dbReference>
<dbReference type="PROSITE" id="PS50157">
    <property type="entry name" value="ZINC_FINGER_C2H2_2"/>
    <property type="match status" value="11"/>
</dbReference>